<proteinExistence type="inferred from homology"/>
<protein>
    <recommendedName>
        <fullName evidence="1">D-ribose pyranase</fullName>
        <ecNumber evidence="1">5.4.99.62</ecNumber>
    </recommendedName>
</protein>
<name>RBSD_STAAT</name>
<feature type="chain" id="PRO_0000346273" description="D-ribose pyranase">
    <location>
        <begin position="1"/>
        <end position="134"/>
    </location>
</feature>
<feature type="active site" description="Proton donor" evidence="1">
    <location>
        <position position="20"/>
    </location>
</feature>
<feature type="binding site" evidence="1">
    <location>
        <position position="28"/>
    </location>
    <ligand>
        <name>substrate</name>
    </ligand>
</feature>
<feature type="binding site" evidence="1">
    <location>
        <position position="99"/>
    </location>
    <ligand>
        <name>substrate</name>
    </ligand>
</feature>
<feature type="binding site" evidence="1">
    <location>
        <begin position="123"/>
        <end position="125"/>
    </location>
    <ligand>
        <name>substrate</name>
    </ligand>
</feature>
<keyword id="KW-0119">Carbohydrate metabolism</keyword>
<keyword id="KW-0963">Cytoplasm</keyword>
<keyword id="KW-0413">Isomerase</keyword>
<gene>
    <name evidence="1" type="primary">rbsD</name>
    <name type="ordered locus">USA300HOU_0281</name>
</gene>
<evidence type="ECO:0000255" key="1">
    <source>
        <dbReference type="HAMAP-Rule" id="MF_01661"/>
    </source>
</evidence>
<accession>A8Z0N3</accession>
<organism>
    <name type="scientific">Staphylococcus aureus (strain USA300 / TCH1516)</name>
    <dbReference type="NCBI Taxonomy" id="451516"/>
    <lineage>
        <taxon>Bacteria</taxon>
        <taxon>Bacillati</taxon>
        <taxon>Bacillota</taxon>
        <taxon>Bacilli</taxon>
        <taxon>Bacillales</taxon>
        <taxon>Staphylococcaceae</taxon>
        <taxon>Staphylococcus</taxon>
    </lineage>
</organism>
<sequence length="134" mass="15180">MKKSAILNEHISKAIATIGHFDLLTINDAGMPIPNDHRRIDLAVTKNLPRFIDVLATVLEEMEIQKIYLAEEIKEHNPTQLQQIKQLISSEIEIIFIPHEEMKSNLAHPLNKGNIRTGETTPYSNIALESNVTF</sequence>
<dbReference type="EC" id="5.4.99.62" evidence="1"/>
<dbReference type="EMBL" id="CP000730">
    <property type="protein sequence ID" value="ABX28312.1"/>
    <property type="molecule type" value="Genomic_DNA"/>
</dbReference>
<dbReference type="RefSeq" id="WP_000747850.1">
    <property type="nucleotide sequence ID" value="NC_010079.1"/>
</dbReference>
<dbReference type="SMR" id="A8Z0N3"/>
<dbReference type="KEGG" id="sax:USA300HOU_0281"/>
<dbReference type="HOGENOM" id="CLU_135498_0_0_9"/>
<dbReference type="UniPathway" id="UPA00916">
    <property type="reaction ID" value="UER00888"/>
</dbReference>
<dbReference type="GO" id="GO:0005829">
    <property type="term" value="C:cytosol"/>
    <property type="evidence" value="ECO:0007669"/>
    <property type="project" value="TreeGrafter"/>
</dbReference>
<dbReference type="GO" id="GO:0062193">
    <property type="term" value="F:D-ribose pyranase activity"/>
    <property type="evidence" value="ECO:0007669"/>
    <property type="project" value="UniProtKB-EC"/>
</dbReference>
<dbReference type="GO" id="GO:0016872">
    <property type="term" value="F:intramolecular lyase activity"/>
    <property type="evidence" value="ECO:0007669"/>
    <property type="project" value="UniProtKB-UniRule"/>
</dbReference>
<dbReference type="GO" id="GO:0048029">
    <property type="term" value="F:monosaccharide binding"/>
    <property type="evidence" value="ECO:0007669"/>
    <property type="project" value="InterPro"/>
</dbReference>
<dbReference type="GO" id="GO:0019303">
    <property type="term" value="P:D-ribose catabolic process"/>
    <property type="evidence" value="ECO:0007669"/>
    <property type="project" value="UniProtKB-UniRule"/>
</dbReference>
<dbReference type="FunFam" id="3.40.1650.10:FF:000004">
    <property type="entry name" value="D-ribose pyranase"/>
    <property type="match status" value="1"/>
</dbReference>
<dbReference type="Gene3D" id="3.40.1650.10">
    <property type="entry name" value="RbsD-like domain"/>
    <property type="match status" value="1"/>
</dbReference>
<dbReference type="HAMAP" id="MF_01661">
    <property type="entry name" value="D_rib_pyranase"/>
    <property type="match status" value="1"/>
</dbReference>
<dbReference type="InterPro" id="IPR023064">
    <property type="entry name" value="D-ribose_pyranase"/>
</dbReference>
<dbReference type="InterPro" id="IPR023750">
    <property type="entry name" value="RbsD-like_sf"/>
</dbReference>
<dbReference type="InterPro" id="IPR007721">
    <property type="entry name" value="RbsD_FucU"/>
</dbReference>
<dbReference type="NCBIfam" id="NF008761">
    <property type="entry name" value="PRK11797.1"/>
    <property type="match status" value="1"/>
</dbReference>
<dbReference type="PANTHER" id="PTHR37831">
    <property type="entry name" value="D-RIBOSE PYRANASE"/>
    <property type="match status" value="1"/>
</dbReference>
<dbReference type="PANTHER" id="PTHR37831:SF1">
    <property type="entry name" value="D-RIBOSE PYRANASE"/>
    <property type="match status" value="1"/>
</dbReference>
<dbReference type="Pfam" id="PF05025">
    <property type="entry name" value="RbsD_FucU"/>
    <property type="match status" value="1"/>
</dbReference>
<dbReference type="SUPFAM" id="SSF102546">
    <property type="entry name" value="RbsD-like"/>
    <property type="match status" value="1"/>
</dbReference>
<comment type="function">
    <text evidence="1">Catalyzes the interconversion of beta-pyran and beta-furan forms of D-ribose.</text>
</comment>
<comment type="catalytic activity">
    <reaction evidence="1">
        <text>beta-D-ribopyranose = beta-D-ribofuranose</text>
        <dbReference type="Rhea" id="RHEA:25432"/>
        <dbReference type="ChEBI" id="CHEBI:27476"/>
        <dbReference type="ChEBI" id="CHEBI:47002"/>
        <dbReference type="EC" id="5.4.99.62"/>
    </reaction>
</comment>
<comment type="pathway">
    <text evidence="1">Carbohydrate metabolism; D-ribose degradation; D-ribose 5-phosphate from beta-D-ribopyranose: step 1/2.</text>
</comment>
<comment type="subunit">
    <text evidence="1">Homodecamer.</text>
</comment>
<comment type="subcellular location">
    <subcellularLocation>
        <location evidence="1">Cytoplasm</location>
    </subcellularLocation>
</comment>
<comment type="similarity">
    <text evidence="1">Belongs to the RbsD / FucU family. RbsD subfamily.</text>
</comment>
<reference key="1">
    <citation type="journal article" date="2007" name="BMC Microbiol.">
        <title>Subtle genetic changes enhance virulence of methicillin resistant and sensitive Staphylococcus aureus.</title>
        <authorList>
            <person name="Highlander S.K."/>
            <person name="Hulten K.G."/>
            <person name="Qin X."/>
            <person name="Jiang H."/>
            <person name="Yerrapragada S."/>
            <person name="Mason E.O. Jr."/>
            <person name="Shang Y."/>
            <person name="Williams T.M."/>
            <person name="Fortunov R.M."/>
            <person name="Liu Y."/>
            <person name="Igboeli O."/>
            <person name="Petrosino J."/>
            <person name="Tirumalai M."/>
            <person name="Uzman A."/>
            <person name="Fox G.E."/>
            <person name="Cardenas A.M."/>
            <person name="Muzny D.M."/>
            <person name="Hemphill L."/>
            <person name="Ding Y."/>
            <person name="Dugan S."/>
            <person name="Blyth P.R."/>
            <person name="Buhay C.J."/>
            <person name="Dinh H.H."/>
            <person name="Hawes A.C."/>
            <person name="Holder M."/>
            <person name="Kovar C.L."/>
            <person name="Lee S.L."/>
            <person name="Liu W."/>
            <person name="Nazareth L.V."/>
            <person name="Wang Q."/>
            <person name="Zhou J."/>
            <person name="Kaplan S.L."/>
            <person name="Weinstock G.M."/>
        </authorList>
    </citation>
    <scope>NUCLEOTIDE SEQUENCE [LARGE SCALE GENOMIC DNA]</scope>
    <source>
        <strain>USA300 / TCH1516</strain>
    </source>
</reference>